<dbReference type="EMBL" id="BA000036">
    <property type="protein sequence ID" value="BAB98862.1"/>
    <property type="status" value="ALT_INIT"/>
    <property type="molecule type" value="Genomic_DNA"/>
</dbReference>
<dbReference type="EMBL" id="BX927152">
    <property type="protein sequence ID" value="CAF21478.1"/>
    <property type="molecule type" value="Genomic_DNA"/>
</dbReference>
<dbReference type="RefSeq" id="NP_600686.1">
    <property type="nucleotide sequence ID" value="NC_003450.3"/>
</dbReference>
<dbReference type="RefSeq" id="WP_011014386.1">
    <property type="nucleotide sequence ID" value="NC_006958.1"/>
</dbReference>
<dbReference type="STRING" id="196627.cg1660"/>
<dbReference type="KEGG" id="cgb:cg1660"/>
<dbReference type="KEGG" id="cgl:Cgl1469"/>
<dbReference type="PATRIC" id="fig|196627.13.peg.1437"/>
<dbReference type="eggNOG" id="COG1971">
    <property type="taxonomic scope" value="Bacteria"/>
</dbReference>
<dbReference type="HOGENOM" id="CLU_096410_3_0_11"/>
<dbReference type="OrthoDB" id="9811590at2"/>
<dbReference type="BioCyc" id="CORYNE:G18NG-11052-MONOMER"/>
<dbReference type="Proteomes" id="UP000000582">
    <property type="component" value="Chromosome"/>
</dbReference>
<dbReference type="Proteomes" id="UP000001009">
    <property type="component" value="Chromosome"/>
</dbReference>
<dbReference type="GO" id="GO:0005886">
    <property type="term" value="C:plasma membrane"/>
    <property type="evidence" value="ECO:0007669"/>
    <property type="project" value="UniProtKB-SubCell"/>
</dbReference>
<dbReference type="GO" id="GO:0005384">
    <property type="term" value="F:manganese ion transmembrane transporter activity"/>
    <property type="evidence" value="ECO:0007669"/>
    <property type="project" value="UniProtKB-UniRule"/>
</dbReference>
<dbReference type="HAMAP" id="MF_01521">
    <property type="entry name" value="MntP_pump"/>
    <property type="match status" value="1"/>
</dbReference>
<dbReference type="InterPro" id="IPR003810">
    <property type="entry name" value="Mntp/YtaF"/>
</dbReference>
<dbReference type="InterPro" id="IPR022929">
    <property type="entry name" value="Put_MntP"/>
</dbReference>
<dbReference type="PANTHER" id="PTHR35529">
    <property type="entry name" value="MANGANESE EFFLUX PUMP MNTP-RELATED"/>
    <property type="match status" value="1"/>
</dbReference>
<dbReference type="PANTHER" id="PTHR35529:SF1">
    <property type="entry name" value="MANGANESE EFFLUX PUMP MNTP-RELATED"/>
    <property type="match status" value="1"/>
</dbReference>
<dbReference type="Pfam" id="PF02659">
    <property type="entry name" value="Mntp"/>
    <property type="match status" value="1"/>
</dbReference>
<sequence>MPFLQISLLSIGVAADAFACSVVRGTAIQVNLFKRALVLAGIFGVFQAAMPLIGWFIGRFFAGITFIAEIDHWIAFALLGIVGTKMIWDAFQPEDDETIVDDGRVQFRPAIILGLATSIDALAVGMGLAFVEVSILKVALSMGSITFALSLAGAWIGHHGGGKFGKWATILGGIILIGIGANIVYEHLSA</sequence>
<organism>
    <name type="scientific">Corynebacterium glutamicum (strain ATCC 13032 / DSM 20300 / JCM 1318 / BCRC 11384 / CCUG 27702 / LMG 3730 / NBRC 12168 / NCIMB 10025 / NRRL B-2784 / 534)</name>
    <dbReference type="NCBI Taxonomy" id="196627"/>
    <lineage>
        <taxon>Bacteria</taxon>
        <taxon>Bacillati</taxon>
        <taxon>Actinomycetota</taxon>
        <taxon>Actinomycetes</taxon>
        <taxon>Mycobacteriales</taxon>
        <taxon>Corynebacteriaceae</taxon>
        <taxon>Corynebacterium</taxon>
    </lineage>
</organism>
<accession>Q8NQG6</accession>
<accession>Q6M5B3</accession>
<proteinExistence type="inferred from homology"/>
<keyword id="KW-1003">Cell membrane</keyword>
<keyword id="KW-0406">Ion transport</keyword>
<keyword id="KW-0464">Manganese</keyword>
<keyword id="KW-0472">Membrane</keyword>
<keyword id="KW-1185">Reference proteome</keyword>
<keyword id="KW-0812">Transmembrane</keyword>
<keyword id="KW-1133">Transmembrane helix</keyword>
<keyword id="KW-0813">Transport</keyword>
<protein>
    <recommendedName>
        <fullName evidence="1">Putative manganese efflux pump MntP</fullName>
    </recommendedName>
</protein>
<comment type="function">
    <text evidence="1">Probably functions as a manganese efflux pump.</text>
</comment>
<comment type="subcellular location">
    <subcellularLocation>
        <location evidence="1">Cell membrane</location>
        <topology evidence="1">Multi-pass membrane protein</topology>
    </subcellularLocation>
</comment>
<comment type="similarity">
    <text evidence="1">Belongs to the MntP (TC 9.B.29) family.</text>
</comment>
<comment type="sequence caution" evidence="2">
    <conflict type="erroneous initiation">
        <sequence resource="EMBL-CDS" id="BAB98862"/>
    </conflict>
</comment>
<feature type="chain" id="PRO_0000155646" description="Putative manganese efflux pump MntP">
    <location>
        <begin position="1"/>
        <end position="190"/>
    </location>
</feature>
<feature type="transmembrane region" description="Helical" evidence="1">
    <location>
        <begin position="3"/>
        <end position="23"/>
    </location>
</feature>
<feature type="transmembrane region" description="Helical" evidence="1">
    <location>
        <begin position="37"/>
        <end position="57"/>
    </location>
</feature>
<feature type="transmembrane region" description="Helical" evidence="1">
    <location>
        <begin position="72"/>
        <end position="88"/>
    </location>
</feature>
<feature type="transmembrane region" description="Helical" evidence="1">
    <location>
        <begin position="111"/>
        <end position="131"/>
    </location>
</feature>
<feature type="transmembrane region" description="Helical" evidence="1">
    <location>
        <begin position="138"/>
        <end position="158"/>
    </location>
</feature>
<feature type="transmembrane region" description="Helical" evidence="1">
    <location>
        <begin position="164"/>
        <end position="184"/>
    </location>
</feature>
<evidence type="ECO:0000255" key="1">
    <source>
        <dbReference type="HAMAP-Rule" id="MF_01521"/>
    </source>
</evidence>
<evidence type="ECO:0000305" key="2"/>
<name>MNTP_CORGL</name>
<gene>
    <name evidence="1" type="primary">mntP</name>
    <name type="ordered locus">Cgl1469</name>
    <name type="ordered locus">cg1660</name>
</gene>
<reference key="1">
    <citation type="journal article" date="2003" name="Appl. Microbiol. Biotechnol.">
        <title>The Corynebacterium glutamicum genome: features and impacts on biotechnological processes.</title>
        <authorList>
            <person name="Ikeda M."/>
            <person name="Nakagawa S."/>
        </authorList>
    </citation>
    <scope>NUCLEOTIDE SEQUENCE [LARGE SCALE GENOMIC DNA]</scope>
    <source>
        <strain>ATCC 13032 / DSM 20300 / JCM 1318 / BCRC 11384 / CCUG 27702 / LMG 3730 / NBRC 12168 / NCIMB 10025 / NRRL B-2784 / 534</strain>
    </source>
</reference>
<reference key="2">
    <citation type="journal article" date="2003" name="J. Biotechnol.">
        <title>The complete Corynebacterium glutamicum ATCC 13032 genome sequence and its impact on the production of L-aspartate-derived amino acids and vitamins.</title>
        <authorList>
            <person name="Kalinowski J."/>
            <person name="Bathe B."/>
            <person name="Bartels D."/>
            <person name="Bischoff N."/>
            <person name="Bott M."/>
            <person name="Burkovski A."/>
            <person name="Dusch N."/>
            <person name="Eggeling L."/>
            <person name="Eikmanns B.J."/>
            <person name="Gaigalat L."/>
            <person name="Goesmann A."/>
            <person name="Hartmann M."/>
            <person name="Huthmacher K."/>
            <person name="Kraemer R."/>
            <person name="Linke B."/>
            <person name="McHardy A.C."/>
            <person name="Meyer F."/>
            <person name="Moeckel B."/>
            <person name="Pfefferle W."/>
            <person name="Puehler A."/>
            <person name="Rey D.A."/>
            <person name="Rueckert C."/>
            <person name="Rupp O."/>
            <person name="Sahm H."/>
            <person name="Wendisch V.F."/>
            <person name="Wiegraebe I."/>
            <person name="Tauch A."/>
        </authorList>
    </citation>
    <scope>NUCLEOTIDE SEQUENCE [LARGE SCALE GENOMIC DNA]</scope>
    <source>
        <strain>ATCC 13032 / DSM 20300 / JCM 1318 / BCRC 11384 / CCUG 27702 / LMG 3730 / NBRC 12168 / NCIMB 10025 / NRRL B-2784 / 534</strain>
    </source>
</reference>